<dbReference type="EC" id="1.3.5.2" evidence="1"/>
<dbReference type="EMBL" id="CP000854">
    <property type="protein sequence ID" value="ACC41555.1"/>
    <property type="molecule type" value="Genomic_DNA"/>
</dbReference>
<dbReference type="RefSeq" id="WP_012394800.1">
    <property type="nucleotide sequence ID" value="NC_010612.1"/>
</dbReference>
<dbReference type="SMR" id="B2HFZ1"/>
<dbReference type="STRING" id="216594.MMAR_3120"/>
<dbReference type="KEGG" id="mmi:MMAR_3120"/>
<dbReference type="eggNOG" id="COG0167">
    <property type="taxonomic scope" value="Bacteria"/>
</dbReference>
<dbReference type="HOGENOM" id="CLU_013640_2_0_11"/>
<dbReference type="OrthoDB" id="9802377at2"/>
<dbReference type="UniPathway" id="UPA00070">
    <property type="reaction ID" value="UER00946"/>
</dbReference>
<dbReference type="Proteomes" id="UP000001190">
    <property type="component" value="Chromosome"/>
</dbReference>
<dbReference type="GO" id="GO:0005737">
    <property type="term" value="C:cytoplasm"/>
    <property type="evidence" value="ECO:0007669"/>
    <property type="project" value="InterPro"/>
</dbReference>
<dbReference type="GO" id="GO:0005886">
    <property type="term" value="C:plasma membrane"/>
    <property type="evidence" value="ECO:0007669"/>
    <property type="project" value="UniProtKB-SubCell"/>
</dbReference>
<dbReference type="GO" id="GO:0106430">
    <property type="term" value="F:dihydroorotate dehydrogenase (quinone) activity"/>
    <property type="evidence" value="ECO:0007669"/>
    <property type="project" value="UniProtKB-EC"/>
</dbReference>
<dbReference type="GO" id="GO:0006207">
    <property type="term" value="P:'de novo' pyrimidine nucleobase biosynthetic process"/>
    <property type="evidence" value="ECO:0007669"/>
    <property type="project" value="InterPro"/>
</dbReference>
<dbReference type="GO" id="GO:0044205">
    <property type="term" value="P:'de novo' UMP biosynthetic process"/>
    <property type="evidence" value="ECO:0007669"/>
    <property type="project" value="UniProtKB-UniRule"/>
</dbReference>
<dbReference type="CDD" id="cd04738">
    <property type="entry name" value="DHOD_2_like"/>
    <property type="match status" value="1"/>
</dbReference>
<dbReference type="FunFam" id="3.20.20.70:FF:000123">
    <property type="entry name" value="Dihydroorotate dehydrogenase (quinone)"/>
    <property type="match status" value="1"/>
</dbReference>
<dbReference type="Gene3D" id="3.20.20.70">
    <property type="entry name" value="Aldolase class I"/>
    <property type="match status" value="1"/>
</dbReference>
<dbReference type="HAMAP" id="MF_00225">
    <property type="entry name" value="DHO_dh_type2"/>
    <property type="match status" value="1"/>
</dbReference>
<dbReference type="InterPro" id="IPR013785">
    <property type="entry name" value="Aldolase_TIM"/>
</dbReference>
<dbReference type="InterPro" id="IPR050074">
    <property type="entry name" value="DHO_dehydrogenase"/>
</dbReference>
<dbReference type="InterPro" id="IPR005719">
    <property type="entry name" value="Dihydroorotate_DH_2"/>
</dbReference>
<dbReference type="InterPro" id="IPR005720">
    <property type="entry name" value="Dihydroorotate_DH_cat"/>
</dbReference>
<dbReference type="InterPro" id="IPR001295">
    <property type="entry name" value="Dihydroorotate_DH_CS"/>
</dbReference>
<dbReference type="NCBIfam" id="NF003645">
    <property type="entry name" value="PRK05286.1-2"/>
    <property type="match status" value="1"/>
</dbReference>
<dbReference type="NCBIfam" id="NF003648">
    <property type="entry name" value="PRK05286.2-1"/>
    <property type="match status" value="1"/>
</dbReference>
<dbReference type="NCBIfam" id="NF003652">
    <property type="entry name" value="PRK05286.2-5"/>
    <property type="match status" value="1"/>
</dbReference>
<dbReference type="NCBIfam" id="TIGR01036">
    <property type="entry name" value="pyrD_sub2"/>
    <property type="match status" value="1"/>
</dbReference>
<dbReference type="PANTHER" id="PTHR48109:SF4">
    <property type="entry name" value="DIHYDROOROTATE DEHYDROGENASE (QUINONE), MITOCHONDRIAL"/>
    <property type="match status" value="1"/>
</dbReference>
<dbReference type="PANTHER" id="PTHR48109">
    <property type="entry name" value="DIHYDROOROTATE DEHYDROGENASE (QUINONE), MITOCHONDRIAL-RELATED"/>
    <property type="match status" value="1"/>
</dbReference>
<dbReference type="Pfam" id="PF01180">
    <property type="entry name" value="DHO_dh"/>
    <property type="match status" value="1"/>
</dbReference>
<dbReference type="SUPFAM" id="SSF51395">
    <property type="entry name" value="FMN-linked oxidoreductases"/>
    <property type="match status" value="1"/>
</dbReference>
<dbReference type="PROSITE" id="PS00911">
    <property type="entry name" value="DHODEHASE_1"/>
    <property type="match status" value="1"/>
</dbReference>
<dbReference type="PROSITE" id="PS00912">
    <property type="entry name" value="DHODEHASE_2"/>
    <property type="match status" value="1"/>
</dbReference>
<evidence type="ECO:0000255" key="1">
    <source>
        <dbReference type="HAMAP-Rule" id="MF_00225"/>
    </source>
</evidence>
<name>PYRD_MYCMM</name>
<proteinExistence type="inferred from homology"/>
<comment type="function">
    <text evidence="1">Catalyzes the conversion of dihydroorotate to orotate with quinone as electron acceptor.</text>
</comment>
<comment type="catalytic activity">
    <reaction evidence="1">
        <text>(S)-dihydroorotate + a quinone = orotate + a quinol</text>
        <dbReference type="Rhea" id="RHEA:30187"/>
        <dbReference type="ChEBI" id="CHEBI:24646"/>
        <dbReference type="ChEBI" id="CHEBI:30839"/>
        <dbReference type="ChEBI" id="CHEBI:30864"/>
        <dbReference type="ChEBI" id="CHEBI:132124"/>
        <dbReference type="EC" id="1.3.5.2"/>
    </reaction>
</comment>
<comment type="cofactor">
    <cofactor evidence="1">
        <name>FMN</name>
        <dbReference type="ChEBI" id="CHEBI:58210"/>
    </cofactor>
    <text evidence="1">Binds 1 FMN per subunit.</text>
</comment>
<comment type="pathway">
    <text evidence="1">Pyrimidine metabolism; UMP biosynthesis via de novo pathway; orotate from (S)-dihydroorotate (quinone route): step 1/1.</text>
</comment>
<comment type="subunit">
    <text evidence="1">Monomer.</text>
</comment>
<comment type="subcellular location">
    <subcellularLocation>
        <location evidence="1">Cell membrane</location>
        <topology evidence="1">Peripheral membrane protein</topology>
    </subcellularLocation>
</comment>
<comment type="similarity">
    <text evidence="1">Belongs to the dihydroorotate dehydrogenase family. Type 2 subfamily.</text>
</comment>
<feature type="chain" id="PRO_1000100272" description="Dihydroorotate dehydrogenase (quinone)">
    <location>
        <begin position="1"/>
        <end position="360"/>
    </location>
</feature>
<feature type="active site" description="Nucleophile" evidence="1">
    <location>
        <position position="179"/>
    </location>
</feature>
<feature type="binding site" evidence="1">
    <location>
        <begin position="66"/>
        <end position="70"/>
    </location>
    <ligand>
        <name>FMN</name>
        <dbReference type="ChEBI" id="CHEBI:58210"/>
    </ligand>
</feature>
<feature type="binding site" evidence="1">
    <location>
        <position position="70"/>
    </location>
    <ligand>
        <name>substrate</name>
    </ligand>
</feature>
<feature type="binding site" evidence="1">
    <location>
        <position position="90"/>
    </location>
    <ligand>
        <name>FMN</name>
        <dbReference type="ChEBI" id="CHEBI:58210"/>
    </ligand>
</feature>
<feature type="binding site" evidence="1">
    <location>
        <begin position="115"/>
        <end position="119"/>
    </location>
    <ligand>
        <name>substrate</name>
    </ligand>
</feature>
<feature type="binding site" evidence="1">
    <location>
        <position position="143"/>
    </location>
    <ligand>
        <name>FMN</name>
        <dbReference type="ChEBI" id="CHEBI:58210"/>
    </ligand>
</feature>
<feature type="binding site" evidence="1">
    <location>
        <position position="176"/>
    </location>
    <ligand>
        <name>FMN</name>
        <dbReference type="ChEBI" id="CHEBI:58210"/>
    </ligand>
</feature>
<feature type="binding site" evidence="1">
    <location>
        <position position="176"/>
    </location>
    <ligand>
        <name>substrate</name>
    </ligand>
</feature>
<feature type="binding site" evidence="1">
    <location>
        <position position="181"/>
    </location>
    <ligand>
        <name>substrate</name>
    </ligand>
</feature>
<feature type="binding site" evidence="1">
    <location>
        <position position="212"/>
    </location>
    <ligand>
        <name>FMN</name>
        <dbReference type="ChEBI" id="CHEBI:58210"/>
    </ligand>
</feature>
<feature type="binding site" evidence="1">
    <location>
        <position position="240"/>
    </location>
    <ligand>
        <name>FMN</name>
        <dbReference type="ChEBI" id="CHEBI:58210"/>
    </ligand>
</feature>
<feature type="binding site" evidence="1">
    <location>
        <begin position="241"/>
        <end position="242"/>
    </location>
    <ligand>
        <name>substrate</name>
    </ligand>
</feature>
<feature type="binding site" evidence="1">
    <location>
        <position position="264"/>
    </location>
    <ligand>
        <name>FMN</name>
        <dbReference type="ChEBI" id="CHEBI:58210"/>
    </ligand>
</feature>
<feature type="binding site" evidence="1">
    <location>
        <position position="293"/>
    </location>
    <ligand>
        <name>FMN</name>
        <dbReference type="ChEBI" id="CHEBI:58210"/>
    </ligand>
</feature>
<feature type="binding site" evidence="1">
    <location>
        <begin position="314"/>
        <end position="315"/>
    </location>
    <ligand>
        <name>FMN</name>
        <dbReference type="ChEBI" id="CHEBI:58210"/>
    </ligand>
</feature>
<sequence>MYGLLRRLLFLLPPERVHKLVFAVLRGATAATPVRRMLTRWLGPTDPVLASTVFGVRFPGPLGLAAGFDKDGTGLDTWAAMGFGYAEVGTVTAHPQPGNPAPRLFRLPEDRALLNRMGFNNHGAGALAIRLARHHPEVPVGVNIGKTKTTPADQAVDDYRASARLVGPLASYLVVNVSSPNTPGLRDLQAVESLRPILAAVLAETSTPVLVKIAPDLSDSDVDEVADLAVELGLAGIVATNTTVSRDGLLTPGVGQLGAGGISGPPVAERSLEVLCRLYQRVGDRLTLISVGGIETAEDAWDRITAGASLLQGYTGFIYGGGLWSKHIHDGIARRLHQGGFGSLHEAVGSNAAERGRPPS</sequence>
<protein>
    <recommendedName>
        <fullName evidence="1">Dihydroorotate dehydrogenase (quinone)</fullName>
        <ecNumber evidence="1">1.3.5.2</ecNumber>
    </recommendedName>
    <alternativeName>
        <fullName evidence="1">DHOdehase</fullName>
        <shortName evidence="1">DHOD</shortName>
        <shortName evidence="1">DHODase</shortName>
    </alternativeName>
    <alternativeName>
        <fullName evidence="1">Dihydroorotate oxidase</fullName>
    </alternativeName>
</protein>
<reference key="1">
    <citation type="journal article" date="2008" name="Genome Res.">
        <title>Insights from the complete genome sequence of Mycobacterium marinum on the evolution of Mycobacterium tuberculosis.</title>
        <authorList>
            <person name="Stinear T.P."/>
            <person name="Seemann T."/>
            <person name="Harrison P.F."/>
            <person name="Jenkin G.A."/>
            <person name="Davies J.K."/>
            <person name="Johnson P.D."/>
            <person name="Abdellah Z."/>
            <person name="Arrowsmith C."/>
            <person name="Chillingworth T."/>
            <person name="Churcher C."/>
            <person name="Clarke K."/>
            <person name="Cronin A."/>
            <person name="Davis P."/>
            <person name="Goodhead I."/>
            <person name="Holroyd N."/>
            <person name="Jagels K."/>
            <person name="Lord A."/>
            <person name="Moule S."/>
            <person name="Mungall K."/>
            <person name="Norbertczak H."/>
            <person name="Quail M.A."/>
            <person name="Rabbinowitsch E."/>
            <person name="Walker D."/>
            <person name="White B."/>
            <person name="Whitehead S."/>
            <person name="Small P.L."/>
            <person name="Brosch R."/>
            <person name="Ramakrishnan L."/>
            <person name="Fischbach M.A."/>
            <person name="Parkhill J."/>
            <person name="Cole S.T."/>
        </authorList>
    </citation>
    <scope>NUCLEOTIDE SEQUENCE [LARGE SCALE GENOMIC DNA]</scope>
    <source>
        <strain>ATCC BAA-535 / M</strain>
    </source>
</reference>
<organism>
    <name type="scientific">Mycobacterium marinum (strain ATCC BAA-535 / M)</name>
    <dbReference type="NCBI Taxonomy" id="216594"/>
    <lineage>
        <taxon>Bacteria</taxon>
        <taxon>Bacillati</taxon>
        <taxon>Actinomycetota</taxon>
        <taxon>Actinomycetes</taxon>
        <taxon>Mycobacteriales</taxon>
        <taxon>Mycobacteriaceae</taxon>
        <taxon>Mycobacterium</taxon>
        <taxon>Mycobacterium ulcerans group</taxon>
    </lineage>
</organism>
<keyword id="KW-1003">Cell membrane</keyword>
<keyword id="KW-0285">Flavoprotein</keyword>
<keyword id="KW-0288">FMN</keyword>
<keyword id="KW-0472">Membrane</keyword>
<keyword id="KW-0560">Oxidoreductase</keyword>
<keyword id="KW-0665">Pyrimidine biosynthesis</keyword>
<keyword id="KW-1185">Reference proteome</keyword>
<accession>B2HFZ1</accession>
<gene>
    <name evidence="1" type="primary">pyrD</name>
    <name type="ordered locus">MMAR_3120</name>
</gene>